<name>QUEA_ACET2</name>
<proteinExistence type="inferred from homology"/>
<sequence length="341" mass="38692">MKVSDFYYDLPQELIAQEPVEKRDMSRLMVLDKETGKISHKRFKDIVEYINKGDCLVLNDTRVIPARLLGEKEGTGGKIEFVLLKRINGDVWEVILKPGKKAKPGARFVFGNGELKAEVIEIVEEGNRLVRFEYDGIFEEILDRIGIVPLPPYITKKLDDAERYQTVYSRYKGSAAAPTAGLHFTLELLEELAGRGVKIAYVTLHVGLGTFRPVKVENLEEHKMHSEFYRIKEEDCDKINSTKQNGGKIIAVGTTSCRVLETVGDENGIVRPQSGWTDIFIYPGYKFKVVDSLITNFHLPESTLIMLVSALAGREKILEAYNIAVKERYRFFSFGDAMFIK</sequence>
<evidence type="ECO:0000255" key="1">
    <source>
        <dbReference type="HAMAP-Rule" id="MF_00113"/>
    </source>
</evidence>
<comment type="function">
    <text evidence="1">Transfers and isomerizes the ribose moiety from AdoMet to the 7-aminomethyl group of 7-deazaguanine (preQ1-tRNA) to give epoxyqueuosine (oQ-tRNA).</text>
</comment>
<comment type="catalytic activity">
    <reaction evidence="1">
        <text>7-aminomethyl-7-carbaguanosine(34) in tRNA + S-adenosyl-L-methionine = epoxyqueuosine(34) in tRNA + adenine + L-methionine + 2 H(+)</text>
        <dbReference type="Rhea" id="RHEA:32155"/>
        <dbReference type="Rhea" id="RHEA-COMP:10342"/>
        <dbReference type="Rhea" id="RHEA-COMP:18582"/>
        <dbReference type="ChEBI" id="CHEBI:15378"/>
        <dbReference type="ChEBI" id="CHEBI:16708"/>
        <dbReference type="ChEBI" id="CHEBI:57844"/>
        <dbReference type="ChEBI" id="CHEBI:59789"/>
        <dbReference type="ChEBI" id="CHEBI:82833"/>
        <dbReference type="ChEBI" id="CHEBI:194443"/>
        <dbReference type="EC" id="2.4.99.17"/>
    </reaction>
</comment>
<comment type="pathway">
    <text evidence="1">tRNA modification; tRNA-queuosine biosynthesis.</text>
</comment>
<comment type="subunit">
    <text evidence="1">Monomer.</text>
</comment>
<comment type="subcellular location">
    <subcellularLocation>
        <location evidence="1">Cytoplasm</location>
    </subcellularLocation>
</comment>
<comment type="similarity">
    <text evidence="1">Belongs to the QueA family.</text>
</comment>
<organism>
    <name type="scientific">Acetivibrio thermocellus (strain ATCC 27405 / DSM 1237 / JCM 9322 / NBRC 103400 / NCIMB 10682 / NRRL B-4536 / VPI 7372)</name>
    <name type="common">Clostridium thermocellum</name>
    <dbReference type="NCBI Taxonomy" id="203119"/>
    <lineage>
        <taxon>Bacteria</taxon>
        <taxon>Bacillati</taxon>
        <taxon>Bacillota</taxon>
        <taxon>Clostridia</taxon>
        <taxon>Eubacteriales</taxon>
        <taxon>Oscillospiraceae</taxon>
        <taxon>Acetivibrio</taxon>
    </lineage>
</organism>
<keyword id="KW-0963">Cytoplasm</keyword>
<keyword id="KW-0671">Queuosine biosynthesis</keyword>
<keyword id="KW-1185">Reference proteome</keyword>
<keyword id="KW-0949">S-adenosyl-L-methionine</keyword>
<keyword id="KW-0808">Transferase</keyword>
<reference key="1">
    <citation type="submission" date="2007-02" db="EMBL/GenBank/DDBJ databases">
        <title>Complete sequence of Clostridium thermocellum ATCC 27405.</title>
        <authorList>
            <consortium name="US DOE Joint Genome Institute"/>
            <person name="Copeland A."/>
            <person name="Lucas S."/>
            <person name="Lapidus A."/>
            <person name="Barry K."/>
            <person name="Detter J.C."/>
            <person name="Glavina del Rio T."/>
            <person name="Hammon N."/>
            <person name="Israni S."/>
            <person name="Dalin E."/>
            <person name="Tice H."/>
            <person name="Pitluck S."/>
            <person name="Chertkov O."/>
            <person name="Brettin T."/>
            <person name="Bruce D."/>
            <person name="Han C."/>
            <person name="Tapia R."/>
            <person name="Gilna P."/>
            <person name="Schmutz J."/>
            <person name="Larimer F."/>
            <person name="Land M."/>
            <person name="Hauser L."/>
            <person name="Kyrpides N."/>
            <person name="Mikhailova N."/>
            <person name="Wu J.H.D."/>
            <person name="Newcomb M."/>
            <person name="Richardson P."/>
        </authorList>
    </citation>
    <scope>NUCLEOTIDE SEQUENCE [LARGE SCALE GENOMIC DNA]</scope>
    <source>
        <strain>ATCC 27405 / DSM 1237 / JCM 9322 / NBRC 103400 / NCIMB 10682 / NRRL B-4536 / VPI 7372</strain>
    </source>
</reference>
<accession>A3DE14</accession>
<gene>
    <name evidence="1" type="primary">queA</name>
    <name type="ordered locus">Cthe_0959</name>
</gene>
<dbReference type="EC" id="2.4.99.17" evidence="1"/>
<dbReference type="EMBL" id="CP000568">
    <property type="protein sequence ID" value="ABN52193.1"/>
    <property type="molecule type" value="Genomic_DNA"/>
</dbReference>
<dbReference type="RefSeq" id="WP_003518652.1">
    <property type="nucleotide sequence ID" value="NC_009012.1"/>
</dbReference>
<dbReference type="SMR" id="A3DE14"/>
<dbReference type="STRING" id="203119.Cthe_0959"/>
<dbReference type="GeneID" id="35805701"/>
<dbReference type="KEGG" id="cth:Cthe_0959"/>
<dbReference type="eggNOG" id="COG0809">
    <property type="taxonomic scope" value="Bacteria"/>
</dbReference>
<dbReference type="HOGENOM" id="CLU_039110_1_0_9"/>
<dbReference type="OrthoDB" id="9805933at2"/>
<dbReference type="UniPathway" id="UPA00392"/>
<dbReference type="Proteomes" id="UP000002145">
    <property type="component" value="Chromosome"/>
</dbReference>
<dbReference type="GO" id="GO:0005737">
    <property type="term" value="C:cytoplasm"/>
    <property type="evidence" value="ECO:0007669"/>
    <property type="project" value="UniProtKB-SubCell"/>
</dbReference>
<dbReference type="GO" id="GO:0051075">
    <property type="term" value="F:S-adenosylmethionine:tRNA ribosyltransferase-isomerase activity"/>
    <property type="evidence" value="ECO:0007669"/>
    <property type="project" value="UniProtKB-EC"/>
</dbReference>
<dbReference type="GO" id="GO:0008616">
    <property type="term" value="P:queuosine biosynthetic process"/>
    <property type="evidence" value="ECO:0007669"/>
    <property type="project" value="UniProtKB-UniRule"/>
</dbReference>
<dbReference type="GO" id="GO:0002099">
    <property type="term" value="P:tRNA wobble guanine modification"/>
    <property type="evidence" value="ECO:0007669"/>
    <property type="project" value="TreeGrafter"/>
</dbReference>
<dbReference type="FunFam" id="2.40.10.240:FF:000002">
    <property type="entry name" value="S-adenosylmethionine:tRNA ribosyltransferase-isomerase"/>
    <property type="match status" value="1"/>
</dbReference>
<dbReference type="FunFam" id="3.40.1780.10:FF:000001">
    <property type="entry name" value="S-adenosylmethionine:tRNA ribosyltransferase-isomerase"/>
    <property type="match status" value="1"/>
</dbReference>
<dbReference type="Gene3D" id="2.40.10.240">
    <property type="entry name" value="QueA-like"/>
    <property type="match status" value="1"/>
</dbReference>
<dbReference type="Gene3D" id="3.40.1780.10">
    <property type="entry name" value="QueA-like"/>
    <property type="match status" value="1"/>
</dbReference>
<dbReference type="HAMAP" id="MF_00113">
    <property type="entry name" value="QueA"/>
    <property type="match status" value="1"/>
</dbReference>
<dbReference type="InterPro" id="IPR003699">
    <property type="entry name" value="QueA"/>
</dbReference>
<dbReference type="InterPro" id="IPR042118">
    <property type="entry name" value="QueA_dom1"/>
</dbReference>
<dbReference type="InterPro" id="IPR042119">
    <property type="entry name" value="QueA_dom2"/>
</dbReference>
<dbReference type="InterPro" id="IPR036100">
    <property type="entry name" value="QueA_sf"/>
</dbReference>
<dbReference type="NCBIfam" id="NF001140">
    <property type="entry name" value="PRK00147.1"/>
    <property type="match status" value="1"/>
</dbReference>
<dbReference type="NCBIfam" id="TIGR00113">
    <property type="entry name" value="queA"/>
    <property type="match status" value="1"/>
</dbReference>
<dbReference type="PANTHER" id="PTHR30307">
    <property type="entry name" value="S-ADENOSYLMETHIONINE:TRNA RIBOSYLTRANSFERASE-ISOMERASE"/>
    <property type="match status" value="1"/>
</dbReference>
<dbReference type="PANTHER" id="PTHR30307:SF0">
    <property type="entry name" value="S-ADENOSYLMETHIONINE:TRNA RIBOSYLTRANSFERASE-ISOMERASE"/>
    <property type="match status" value="1"/>
</dbReference>
<dbReference type="Pfam" id="PF02547">
    <property type="entry name" value="Queuosine_synth"/>
    <property type="match status" value="1"/>
</dbReference>
<dbReference type="SUPFAM" id="SSF111337">
    <property type="entry name" value="QueA-like"/>
    <property type="match status" value="1"/>
</dbReference>
<feature type="chain" id="PRO_1000015204" description="S-adenosylmethionine:tRNA ribosyltransferase-isomerase">
    <location>
        <begin position="1"/>
        <end position="341"/>
    </location>
</feature>
<protein>
    <recommendedName>
        <fullName evidence="1">S-adenosylmethionine:tRNA ribosyltransferase-isomerase</fullName>
        <ecNumber evidence="1">2.4.99.17</ecNumber>
    </recommendedName>
    <alternativeName>
        <fullName evidence="1">Queuosine biosynthesis protein QueA</fullName>
    </alternativeName>
</protein>